<protein>
    <recommendedName>
        <fullName evidence="1">3-isopropylmalate dehydratase large subunit</fullName>
        <ecNumber evidence="1">4.2.1.33</ecNumber>
    </recommendedName>
    <alternativeName>
        <fullName evidence="1">Alpha-IPM isomerase</fullName>
        <shortName evidence="1">IPMI</shortName>
    </alternativeName>
    <alternativeName>
        <fullName evidence="1">Isopropylmalate isomerase</fullName>
    </alternativeName>
</protein>
<dbReference type="EC" id="4.2.1.33" evidence="1"/>
<dbReference type="EMBL" id="CP001037">
    <property type="protein sequence ID" value="ACC78959.1"/>
    <property type="molecule type" value="Genomic_DNA"/>
</dbReference>
<dbReference type="RefSeq" id="WP_012406988.1">
    <property type="nucleotide sequence ID" value="NC_010628.1"/>
</dbReference>
<dbReference type="SMR" id="B2J3M9"/>
<dbReference type="STRING" id="63737.Npun_F0162"/>
<dbReference type="EnsemblBacteria" id="ACC78959">
    <property type="protein sequence ID" value="ACC78959"/>
    <property type="gene ID" value="Npun_F0162"/>
</dbReference>
<dbReference type="KEGG" id="npu:Npun_F0162"/>
<dbReference type="eggNOG" id="COG0065">
    <property type="taxonomic scope" value="Bacteria"/>
</dbReference>
<dbReference type="HOGENOM" id="CLU_006714_3_4_3"/>
<dbReference type="OrthoDB" id="9802769at2"/>
<dbReference type="PhylomeDB" id="B2J3M9"/>
<dbReference type="UniPathway" id="UPA00048">
    <property type="reaction ID" value="UER00071"/>
</dbReference>
<dbReference type="Proteomes" id="UP000001191">
    <property type="component" value="Chromosome"/>
</dbReference>
<dbReference type="GO" id="GO:0003861">
    <property type="term" value="F:3-isopropylmalate dehydratase activity"/>
    <property type="evidence" value="ECO:0007669"/>
    <property type="project" value="UniProtKB-UniRule"/>
</dbReference>
<dbReference type="GO" id="GO:0051539">
    <property type="term" value="F:4 iron, 4 sulfur cluster binding"/>
    <property type="evidence" value="ECO:0007669"/>
    <property type="project" value="UniProtKB-KW"/>
</dbReference>
<dbReference type="GO" id="GO:0046872">
    <property type="term" value="F:metal ion binding"/>
    <property type="evidence" value="ECO:0007669"/>
    <property type="project" value="UniProtKB-KW"/>
</dbReference>
<dbReference type="GO" id="GO:0009098">
    <property type="term" value="P:L-leucine biosynthetic process"/>
    <property type="evidence" value="ECO:0007669"/>
    <property type="project" value="UniProtKB-UniRule"/>
</dbReference>
<dbReference type="CDD" id="cd01583">
    <property type="entry name" value="IPMI"/>
    <property type="match status" value="1"/>
</dbReference>
<dbReference type="Gene3D" id="3.30.499.10">
    <property type="entry name" value="Aconitase, domain 3"/>
    <property type="match status" value="2"/>
</dbReference>
<dbReference type="HAMAP" id="MF_01026">
    <property type="entry name" value="LeuC_type1"/>
    <property type="match status" value="1"/>
</dbReference>
<dbReference type="InterPro" id="IPR004430">
    <property type="entry name" value="3-IsopropMal_deHydase_lsu"/>
</dbReference>
<dbReference type="InterPro" id="IPR015931">
    <property type="entry name" value="Acnase/IPM_dHydase_lsu_aba_1/3"/>
</dbReference>
<dbReference type="InterPro" id="IPR001030">
    <property type="entry name" value="Acoase/IPM_deHydtase_lsu_aba"/>
</dbReference>
<dbReference type="InterPro" id="IPR018136">
    <property type="entry name" value="Aconitase_4Fe-4S_BS"/>
</dbReference>
<dbReference type="InterPro" id="IPR036008">
    <property type="entry name" value="Aconitase_4Fe-4S_dom"/>
</dbReference>
<dbReference type="InterPro" id="IPR050067">
    <property type="entry name" value="IPM_dehydratase_rel_enz"/>
</dbReference>
<dbReference type="InterPro" id="IPR033941">
    <property type="entry name" value="IPMI_cat"/>
</dbReference>
<dbReference type="NCBIfam" id="TIGR00170">
    <property type="entry name" value="leuC"/>
    <property type="match status" value="1"/>
</dbReference>
<dbReference type="NCBIfam" id="NF004016">
    <property type="entry name" value="PRK05478.1"/>
    <property type="match status" value="1"/>
</dbReference>
<dbReference type="NCBIfam" id="NF009116">
    <property type="entry name" value="PRK12466.1"/>
    <property type="match status" value="1"/>
</dbReference>
<dbReference type="PANTHER" id="PTHR43822:SF9">
    <property type="entry name" value="3-ISOPROPYLMALATE DEHYDRATASE"/>
    <property type="match status" value="1"/>
</dbReference>
<dbReference type="PANTHER" id="PTHR43822">
    <property type="entry name" value="HOMOACONITASE, MITOCHONDRIAL-RELATED"/>
    <property type="match status" value="1"/>
</dbReference>
<dbReference type="Pfam" id="PF00330">
    <property type="entry name" value="Aconitase"/>
    <property type="match status" value="1"/>
</dbReference>
<dbReference type="PRINTS" id="PR00415">
    <property type="entry name" value="ACONITASE"/>
</dbReference>
<dbReference type="SUPFAM" id="SSF53732">
    <property type="entry name" value="Aconitase iron-sulfur domain"/>
    <property type="match status" value="1"/>
</dbReference>
<dbReference type="PROSITE" id="PS00450">
    <property type="entry name" value="ACONITASE_1"/>
    <property type="match status" value="1"/>
</dbReference>
<dbReference type="PROSITE" id="PS01244">
    <property type="entry name" value="ACONITASE_2"/>
    <property type="match status" value="1"/>
</dbReference>
<organism>
    <name type="scientific">Nostoc punctiforme (strain ATCC 29133 / PCC 73102)</name>
    <dbReference type="NCBI Taxonomy" id="63737"/>
    <lineage>
        <taxon>Bacteria</taxon>
        <taxon>Bacillati</taxon>
        <taxon>Cyanobacteriota</taxon>
        <taxon>Cyanophyceae</taxon>
        <taxon>Nostocales</taxon>
        <taxon>Nostocaceae</taxon>
        <taxon>Nostoc</taxon>
    </lineage>
</organism>
<accession>B2J3M9</accession>
<evidence type="ECO:0000255" key="1">
    <source>
        <dbReference type="HAMAP-Rule" id="MF_01026"/>
    </source>
</evidence>
<evidence type="ECO:0000256" key="2">
    <source>
        <dbReference type="SAM" id="MobiDB-lite"/>
    </source>
</evidence>
<reference key="1">
    <citation type="journal article" date="2013" name="Plant Physiol.">
        <title>A Nostoc punctiforme Sugar Transporter Necessary to Establish a Cyanobacterium-Plant Symbiosis.</title>
        <authorList>
            <person name="Ekman M."/>
            <person name="Picossi S."/>
            <person name="Campbell E.L."/>
            <person name="Meeks J.C."/>
            <person name="Flores E."/>
        </authorList>
    </citation>
    <scope>NUCLEOTIDE SEQUENCE [LARGE SCALE GENOMIC DNA]</scope>
    <source>
        <strain>ATCC 29133 / PCC 73102</strain>
    </source>
</reference>
<keyword id="KW-0004">4Fe-4S</keyword>
<keyword id="KW-0028">Amino-acid biosynthesis</keyword>
<keyword id="KW-0100">Branched-chain amino acid biosynthesis</keyword>
<keyword id="KW-0408">Iron</keyword>
<keyword id="KW-0411">Iron-sulfur</keyword>
<keyword id="KW-0432">Leucine biosynthesis</keyword>
<keyword id="KW-0456">Lyase</keyword>
<keyword id="KW-0479">Metal-binding</keyword>
<keyword id="KW-1185">Reference proteome</keyword>
<sequence>MSKGTLFDKVWDLHTVGTLPSGLTQLFIGLHLIHEVTSPQAFAMLRERGLKVLFPERTVATVDHIVPTENQARPFVDSLAEEMIQALENNCQENNITFYNIGSGSQGIVHVIAPELGLTQPGMTIACGDSHTSSHGAFGAIAFGIGTSQVRDVLASQTLALSKLKVRKIEVNGNLNPGVYAKDVILHIIRTLGVKGGVGYGYEFAGTTFEQMNMEERMTVCNMAIEGGARCGYVNPDRVTYDYLKGRDFAPKGADWDKAVAWWDSIKSDVDAQYDDVVVFDAAEISPTVTWGITPGQGIGVNQSVPQPEELLEEDRFIAEEAYRYMDLYPGQPIKGTKIDVCFIGSCTNGRISDLREAAKIAKGRHVAEGIKAFVVPGSERVKQEAETEGLDKIFQEAGFEWREPGCSMCLAMNPDKLQGRQISASSSNRNFKGRQGSSSGRTLLMSPAMVATAAIKGEVSDVRELL</sequence>
<name>LEUC_NOSP7</name>
<proteinExistence type="inferred from homology"/>
<gene>
    <name evidence="1" type="primary">leuC</name>
    <name type="ordered locus">Npun_F0162</name>
</gene>
<feature type="chain" id="PRO_1000135698" description="3-isopropylmalate dehydratase large subunit">
    <location>
        <begin position="1"/>
        <end position="467"/>
    </location>
</feature>
<feature type="region of interest" description="Disordered" evidence="2">
    <location>
        <begin position="422"/>
        <end position="443"/>
    </location>
</feature>
<feature type="compositionally biased region" description="Polar residues" evidence="2">
    <location>
        <begin position="422"/>
        <end position="442"/>
    </location>
</feature>
<feature type="binding site" evidence="1">
    <location>
        <position position="347"/>
    </location>
    <ligand>
        <name>[4Fe-4S] cluster</name>
        <dbReference type="ChEBI" id="CHEBI:49883"/>
    </ligand>
</feature>
<feature type="binding site" evidence="1">
    <location>
        <position position="407"/>
    </location>
    <ligand>
        <name>[4Fe-4S] cluster</name>
        <dbReference type="ChEBI" id="CHEBI:49883"/>
    </ligand>
</feature>
<feature type="binding site" evidence="1">
    <location>
        <position position="410"/>
    </location>
    <ligand>
        <name>[4Fe-4S] cluster</name>
        <dbReference type="ChEBI" id="CHEBI:49883"/>
    </ligand>
</feature>
<comment type="function">
    <text evidence="1">Catalyzes the isomerization between 2-isopropylmalate and 3-isopropylmalate, via the formation of 2-isopropylmaleate.</text>
</comment>
<comment type="catalytic activity">
    <reaction evidence="1">
        <text>(2R,3S)-3-isopropylmalate = (2S)-2-isopropylmalate</text>
        <dbReference type="Rhea" id="RHEA:32287"/>
        <dbReference type="ChEBI" id="CHEBI:1178"/>
        <dbReference type="ChEBI" id="CHEBI:35121"/>
        <dbReference type="EC" id="4.2.1.33"/>
    </reaction>
</comment>
<comment type="cofactor">
    <cofactor evidence="1">
        <name>[4Fe-4S] cluster</name>
        <dbReference type="ChEBI" id="CHEBI:49883"/>
    </cofactor>
    <text evidence="1">Binds 1 [4Fe-4S] cluster per subunit.</text>
</comment>
<comment type="pathway">
    <text evidence="1">Amino-acid biosynthesis; L-leucine biosynthesis; L-leucine from 3-methyl-2-oxobutanoate: step 2/4.</text>
</comment>
<comment type="subunit">
    <text evidence="1">Heterodimer of LeuC and LeuD.</text>
</comment>
<comment type="similarity">
    <text evidence="1">Belongs to the aconitase/IPM isomerase family. LeuC type 1 subfamily.</text>
</comment>